<reference key="1">
    <citation type="journal article" date="2009" name="Genome Biol.">
        <title>A whole-genome assembly of the domestic cow, Bos taurus.</title>
        <authorList>
            <person name="Zimin A.V."/>
            <person name="Delcher A.L."/>
            <person name="Florea L."/>
            <person name="Kelley D.R."/>
            <person name="Schatz M.C."/>
            <person name="Puiu D."/>
            <person name="Hanrahan F."/>
            <person name="Pertea G."/>
            <person name="Van Tassell C.P."/>
            <person name="Sonstegard T.S."/>
            <person name="Marcais G."/>
            <person name="Roberts M."/>
            <person name="Subramanian P."/>
            <person name="Yorke J.A."/>
            <person name="Salzberg S.L."/>
        </authorList>
    </citation>
    <scope>NUCLEOTIDE SEQUENCE [LARGE SCALE GENOMIC DNA]</scope>
    <source>
        <strain>Hereford</strain>
    </source>
</reference>
<comment type="function">
    <text evidence="1">Receptor for R-spondins that potentiates the canonical Wnt signaling pathway and acts as a stem cell marker of the intestinal epithelium and the hair follicle. Upon binding to R-spondins (RSPO1, RSPO2, RSPO3 or RSPO4), associates with phosphorylated LRP6 and frizzled receptors that are activated by extracellular Wnt receptors, triggering the canonical Wnt signaling pathway to increase expression of target genes. In contrast to classical G-protein coupled receptors, does not activate heterotrimeric G-proteins to transduce the signal. Involved in the development and/or maintenance of the adult intestinal stem cells during postembryonic development (By similarity).</text>
</comment>
<comment type="subunit">
    <text evidence="2">Identified in a complex composed of RNF43, LGR5 and RSPO1 (By similarity). Also interacts with other R-spondin ligands, including RSPO2, RSPO3 and RSPO4 (By similarity).</text>
</comment>
<comment type="subcellular location">
    <subcellularLocation>
        <location evidence="1">Cell membrane</location>
        <topology evidence="1">Multi-pass membrane protein</topology>
    </subcellularLocation>
    <subcellularLocation>
        <location evidence="1">Golgi apparatus</location>
        <location evidence="1">trans-Golgi network membrane</location>
        <topology evidence="1">Multi-pass membrane protein</topology>
    </subcellularLocation>
    <text evidence="1">Rapidly and constitutively internalized to the trans-Golgi network at steady state.</text>
</comment>
<comment type="similarity">
    <text evidence="4">Belongs to the G-protein coupled receptor 1 family.</text>
</comment>
<keyword id="KW-1003">Cell membrane</keyword>
<keyword id="KW-1015">Disulfide bond</keyword>
<keyword id="KW-0297">G-protein coupled receptor</keyword>
<keyword id="KW-0325">Glycoprotein</keyword>
<keyword id="KW-0333">Golgi apparatus</keyword>
<keyword id="KW-0433">Leucine-rich repeat</keyword>
<keyword id="KW-0472">Membrane</keyword>
<keyword id="KW-0675">Receptor</keyword>
<keyword id="KW-1185">Reference proteome</keyword>
<keyword id="KW-0677">Repeat</keyword>
<keyword id="KW-0732">Signal</keyword>
<keyword id="KW-0807">Transducer</keyword>
<keyword id="KW-0812">Transmembrane</keyword>
<keyword id="KW-1133">Transmembrane helix</keyword>
<organism>
    <name type="scientific">Bos taurus</name>
    <name type="common">Bovine</name>
    <dbReference type="NCBI Taxonomy" id="9913"/>
    <lineage>
        <taxon>Eukaryota</taxon>
        <taxon>Metazoa</taxon>
        <taxon>Chordata</taxon>
        <taxon>Craniata</taxon>
        <taxon>Vertebrata</taxon>
        <taxon>Euteleostomi</taxon>
        <taxon>Mammalia</taxon>
        <taxon>Eutheria</taxon>
        <taxon>Laurasiatheria</taxon>
        <taxon>Artiodactyla</taxon>
        <taxon>Ruminantia</taxon>
        <taxon>Pecora</taxon>
        <taxon>Bovidae</taxon>
        <taxon>Bovinae</taxon>
        <taxon>Bos</taxon>
    </lineage>
</organism>
<evidence type="ECO:0000250" key="1"/>
<evidence type="ECO:0000250" key="2">
    <source>
        <dbReference type="UniProtKB" id="O75473"/>
    </source>
</evidence>
<evidence type="ECO:0000255" key="3"/>
<evidence type="ECO:0000255" key="4">
    <source>
        <dbReference type="PROSITE-ProRule" id="PRU00521"/>
    </source>
</evidence>
<sequence length="907" mass="99415">MDTSSVGVLLSLPVLLQLAAGGGSPRPGTLLRGCPAHCQCEPDGRMLLRVDCSDLGLSELPSNLSVFTSYLDLSMNNISQLPPSPLHSLRFLEELRLAGNALTYIPKGAFAGLYSLKVLMLQNNHLRQVPTEALQNLRSLQSLRLDANRISSVPPSCFSGLHSLRHLWLDDNALTEIPVQAFRSLSALQAMTLALNKIHHIPDYAFGNLSSLVVLHLHNNRIHSLGKKCFDGLHSLETLDLNYNNLDEFPTAVRTLSNLKELGFHSNNIKSIPEKAFVGNPSLITIHFYDNPIQLVGRSAFQHLPELRTLTLNGASQITEFPDLTGTASLESLTLTGAQISSLPQTVCDQLPNLQVLDLSYNLLEDLPSFSVCQKLQKIDLRHNEIYEIQADTFQQLFSLRSLNLAWNKIAIIDPNAFSTLPSLRKLDLSSNRLSSIPVTGLHGLTHLKLTGNHALQSLISSENFPELKVIEMPYAYQCCAFGVCENVYKISNPWSKGDNSTAEDLHKKDAGVFQVQDERDLEDFLLDFEEDLRALHPVRCSPSPGPFKLCEYLFGSWLIRIGVWTIAVLALTCNALVTSTVFRAAVYISSIKLLIGLIAAVNMLMGVSSAVLAGVDAFTFGSFAQHGAWWEQAVGCQVVGFLSIFASESSVFLLTLAALERGWSVKCSAKFETQTPFPSLRATLALCALLAGTVAAVPLLGGSEYSASPLCLPLPFGEPRATGYMVALVLLNSLCFLVMTVAYTRLYCHLEKGDLESMWDCSMVKHVALLLFTNCILHCPVAFLSFSSLLNLTFISPEVIKFILLVIVPLPACLNPLLYILFNPHFKEDLGSLGKQTHFWTRSKHTSLMSINSDDVEKQSCDSTQALVTFTSASIAYDLPSSSGSPPAYPMTESCHLSSVAFVPCL</sequence>
<name>LGR5_BOVIN</name>
<protein>
    <recommendedName>
        <fullName>Leucine-rich repeat-containing G-protein coupled receptor 5</fullName>
    </recommendedName>
</protein>
<accession>F1MT22</accession>
<dbReference type="EMBL" id="DAAA02012284">
    <property type="status" value="NOT_ANNOTATED_CDS"/>
    <property type="molecule type" value="Genomic_DNA"/>
</dbReference>
<dbReference type="EMBL" id="DAAA02012285">
    <property type="status" value="NOT_ANNOTATED_CDS"/>
    <property type="molecule type" value="Genomic_DNA"/>
</dbReference>
<dbReference type="EMBL" id="DAAA02012286">
    <property type="status" value="NOT_ANNOTATED_CDS"/>
    <property type="molecule type" value="Genomic_DNA"/>
</dbReference>
<dbReference type="EMBL" id="DAAA02012287">
    <property type="status" value="NOT_ANNOTATED_CDS"/>
    <property type="molecule type" value="Genomic_DNA"/>
</dbReference>
<dbReference type="EMBL" id="DAAA02012288">
    <property type="status" value="NOT_ANNOTATED_CDS"/>
    <property type="molecule type" value="Genomic_DNA"/>
</dbReference>
<dbReference type="SMR" id="F1MT22"/>
<dbReference type="FunCoup" id="F1MT22">
    <property type="interactions" value="35"/>
</dbReference>
<dbReference type="STRING" id="9913.ENSBTAP00000017631"/>
<dbReference type="GlyCosmos" id="F1MT22">
    <property type="glycosylation" value="5 sites, No reported glycans"/>
</dbReference>
<dbReference type="GlyGen" id="F1MT22">
    <property type="glycosylation" value="5 sites"/>
</dbReference>
<dbReference type="PaxDb" id="9913-ENSBTAP00000017631"/>
<dbReference type="eggNOG" id="KOG0619">
    <property type="taxonomic scope" value="Eukaryota"/>
</dbReference>
<dbReference type="eggNOG" id="KOG2087">
    <property type="taxonomic scope" value="Eukaryota"/>
</dbReference>
<dbReference type="HOGENOM" id="CLU_006843_0_0_1"/>
<dbReference type="InParanoid" id="F1MT22"/>
<dbReference type="OrthoDB" id="1883493at2759"/>
<dbReference type="TreeFam" id="TF316814"/>
<dbReference type="Proteomes" id="UP000009136">
    <property type="component" value="Unplaced"/>
</dbReference>
<dbReference type="GO" id="GO:0005886">
    <property type="term" value="C:plasma membrane"/>
    <property type="evidence" value="ECO:0000250"/>
    <property type="project" value="UniProtKB"/>
</dbReference>
<dbReference type="GO" id="GO:0032588">
    <property type="term" value="C:trans-Golgi network membrane"/>
    <property type="evidence" value="ECO:0000250"/>
    <property type="project" value="UniProtKB"/>
</dbReference>
<dbReference type="GO" id="GO:0016500">
    <property type="term" value="F:protein-hormone receptor activity"/>
    <property type="evidence" value="ECO:0007669"/>
    <property type="project" value="InterPro"/>
</dbReference>
<dbReference type="GO" id="GO:0004888">
    <property type="term" value="F:transmembrane signaling receptor activity"/>
    <property type="evidence" value="ECO:0000250"/>
    <property type="project" value="UniProtKB"/>
</dbReference>
<dbReference type="GO" id="GO:0007186">
    <property type="term" value="P:G protein-coupled receptor signaling pathway"/>
    <property type="evidence" value="ECO:0007669"/>
    <property type="project" value="UniProtKB-KW"/>
</dbReference>
<dbReference type="GO" id="GO:0090263">
    <property type="term" value="P:positive regulation of canonical Wnt signaling pathway"/>
    <property type="evidence" value="ECO:0000250"/>
    <property type="project" value="UniProtKB"/>
</dbReference>
<dbReference type="CDD" id="cd15363">
    <property type="entry name" value="7tmA_LGR5"/>
    <property type="match status" value="1"/>
</dbReference>
<dbReference type="FunFam" id="1.20.1070.10:FF:000028">
    <property type="entry name" value="leucine-rich repeat-containing G-protein coupled receptor 4 isoform X1"/>
    <property type="match status" value="1"/>
</dbReference>
<dbReference type="FunFam" id="3.80.10.10:FF:000028">
    <property type="entry name" value="leucine-rich repeat-containing G-protein coupled receptor 4 isoform X1"/>
    <property type="match status" value="1"/>
</dbReference>
<dbReference type="Gene3D" id="1.20.1070.10">
    <property type="entry name" value="Rhodopsin 7-helix transmembrane proteins"/>
    <property type="match status" value="1"/>
</dbReference>
<dbReference type="Gene3D" id="3.80.10.10">
    <property type="entry name" value="Ribonuclease Inhibitor"/>
    <property type="match status" value="1"/>
</dbReference>
<dbReference type="InterPro" id="IPR000276">
    <property type="entry name" value="GPCR_Rhodpsn"/>
</dbReference>
<dbReference type="InterPro" id="IPR017452">
    <property type="entry name" value="GPCR_Rhodpsn_7TM"/>
</dbReference>
<dbReference type="InterPro" id="IPR002131">
    <property type="entry name" value="Gphrmn_rcpt_fam"/>
</dbReference>
<dbReference type="InterPro" id="IPR001611">
    <property type="entry name" value="Leu-rich_rpt"/>
</dbReference>
<dbReference type="InterPro" id="IPR003591">
    <property type="entry name" value="Leu-rich_rpt_typical-subtyp"/>
</dbReference>
<dbReference type="InterPro" id="IPR032675">
    <property type="entry name" value="LRR_dom_sf"/>
</dbReference>
<dbReference type="InterPro" id="IPR000372">
    <property type="entry name" value="LRRNT"/>
</dbReference>
<dbReference type="PANTHER" id="PTHR24372">
    <property type="entry name" value="GLYCOPROTEIN HORMONE RECEPTOR"/>
    <property type="match status" value="1"/>
</dbReference>
<dbReference type="Pfam" id="PF00001">
    <property type="entry name" value="7tm_1"/>
    <property type="match status" value="1"/>
</dbReference>
<dbReference type="Pfam" id="PF00560">
    <property type="entry name" value="LRR_1"/>
    <property type="match status" value="1"/>
</dbReference>
<dbReference type="Pfam" id="PF13855">
    <property type="entry name" value="LRR_8"/>
    <property type="match status" value="4"/>
</dbReference>
<dbReference type="Pfam" id="PF01462">
    <property type="entry name" value="LRRNT"/>
    <property type="match status" value="1"/>
</dbReference>
<dbReference type="PRINTS" id="PR00373">
    <property type="entry name" value="GLYCHORMONER"/>
</dbReference>
<dbReference type="PRINTS" id="PR00237">
    <property type="entry name" value="GPCRRHODOPSN"/>
</dbReference>
<dbReference type="PRINTS" id="PR00019">
    <property type="entry name" value="LEURICHRPT"/>
</dbReference>
<dbReference type="SMART" id="SM00364">
    <property type="entry name" value="LRR_BAC"/>
    <property type="match status" value="5"/>
</dbReference>
<dbReference type="SMART" id="SM00365">
    <property type="entry name" value="LRR_SD22"/>
    <property type="match status" value="5"/>
</dbReference>
<dbReference type="SMART" id="SM00369">
    <property type="entry name" value="LRR_TYP"/>
    <property type="match status" value="14"/>
</dbReference>
<dbReference type="SMART" id="SM00013">
    <property type="entry name" value="LRRNT"/>
    <property type="match status" value="1"/>
</dbReference>
<dbReference type="SUPFAM" id="SSF81321">
    <property type="entry name" value="Family A G protein-coupled receptor-like"/>
    <property type="match status" value="1"/>
</dbReference>
<dbReference type="SUPFAM" id="SSF52058">
    <property type="entry name" value="L domain-like"/>
    <property type="match status" value="2"/>
</dbReference>
<dbReference type="PROSITE" id="PS50262">
    <property type="entry name" value="G_PROTEIN_RECEP_F1_2"/>
    <property type="match status" value="1"/>
</dbReference>
<dbReference type="PROSITE" id="PS51450">
    <property type="entry name" value="LRR"/>
    <property type="match status" value="15"/>
</dbReference>
<proteinExistence type="inferred from homology"/>
<gene>
    <name type="primary">LGR5</name>
</gene>
<feature type="signal peptide" evidence="3">
    <location>
        <begin position="1"/>
        <end position="21"/>
    </location>
</feature>
<feature type="chain" id="PRO_0000422817" description="Leucine-rich repeat-containing G-protein coupled receptor 5">
    <location>
        <begin position="22"/>
        <end position="907"/>
    </location>
</feature>
<feature type="topological domain" description="Extracellular" evidence="3">
    <location>
        <begin position="22"/>
        <end position="553"/>
    </location>
</feature>
<feature type="transmembrane region" description="Helical; Name=1" evidence="3">
    <location>
        <begin position="554"/>
        <end position="574"/>
    </location>
</feature>
<feature type="topological domain" description="Cytoplasmic" evidence="3">
    <location>
        <begin position="575"/>
        <end position="593"/>
    </location>
</feature>
<feature type="transmembrane region" description="Helical; Name=2" evidence="3">
    <location>
        <begin position="594"/>
        <end position="614"/>
    </location>
</feature>
<feature type="topological domain" description="Extracellular" evidence="3">
    <location>
        <begin position="615"/>
        <end position="638"/>
    </location>
</feature>
<feature type="transmembrane region" description="Helical; Name=3" evidence="3">
    <location>
        <begin position="639"/>
        <end position="659"/>
    </location>
</feature>
<feature type="topological domain" description="Cytoplasmic" evidence="3">
    <location>
        <begin position="660"/>
        <end position="682"/>
    </location>
</feature>
<feature type="transmembrane region" description="Helical; Name=4" evidence="3">
    <location>
        <begin position="683"/>
        <end position="703"/>
    </location>
</feature>
<feature type="topological domain" description="Extracellular" evidence="3">
    <location>
        <begin position="704"/>
        <end position="723"/>
    </location>
</feature>
<feature type="transmembrane region" description="Helical; Name=5" evidence="3">
    <location>
        <begin position="724"/>
        <end position="744"/>
    </location>
</feature>
<feature type="topological domain" description="Cytoplasmic" evidence="3">
    <location>
        <begin position="745"/>
        <end position="767"/>
    </location>
</feature>
<feature type="transmembrane region" description="Helical; Name=6" evidence="3">
    <location>
        <begin position="768"/>
        <end position="788"/>
    </location>
</feature>
<feature type="topological domain" description="Extracellular" evidence="3">
    <location>
        <begin position="789"/>
        <end position="802"/>
    </location>
</feature>
<feature type="transmembrane region" description="Helical; Name=7" evidence="3">
    <location>
        <begin position="803"/>
        <end position="823"/>
    </location>
</feature>
<feature type="topological domain" description="Cytoplasmic" evidence="3">
    <location>
        <begin position="824"/>
        <end position="907"/>
    </location>
</feature>
<feature type="domain" description="LRRNT">
    <location>
        <begin position="33"/>
        <end position="64"/>
    </location>
</feature>
<feature type="repeat" description="LRR 1">
    <location>
        <begin position="44"/>
        <end position="64"/>
    </location>
</feature>
<feature type="repeat" description="LRR 2">
    <location>
        <begin position="65"/>
        <end position="88"/>
    </location>
</feature>
<feature type="repeat" description="LRR 3">
    <location>
        <begin position="89"/>
        <end position="112"/>
    </location>
</feature>
<feature type="repeat" description="LRR 4">
    <location>
        <begin position="114"/>
        <end position="136"/>
    </location>
</feature>
<feature type="repeat" description="LRR 5">
    <location>
        <begin position="137"/>
        <end position="160"/>
    </location>
</feature>
<feature type="repeat" description="LRR 6">
    <location>
        <begin position="162"/>
        <end position="184"/>
    </location>
</feature>
<feature type="repeat" description="LRR 7">
    <location>
        <begin position="185"/>
        <end position="208"/>
    </location>
</feature>
<feature type="repeat" description="LRR 8">
    <location>
        <begin position="209"/>
        <end position="232"/>
    </location>
</feature>
<feature type="repeat" description="LRR 9">
    <location>
        <begin position="233"/>
        <end position="256"/>
    </location>
</feature>
<feature type="repeat" description="LRR 10">
    <location>
        <begin position="257"/>
        <end position="279"/>
    </location>
</feature>
<feature type="repeat" description="LRR 11">
    <location>
        <begin position="281"/>
        <end position="303"/>
    </location>
</feature>
<feature type="repeat" description="LRR 12">
    <location>
        <begin position="304"/>
        <end position="327"/>
    </location>
</feature>
<feature type="repeat" description="LRR 13">
    <location>
        <begin position="328"/>
        <end position="350"/>
    </location>
</feature>
<feature type="repeat" description="LRR 14">
    <location>
        <begin position="351"/>
        <end position="375"/>
    </location>
</feature>
<feature type="repeat" description="LRR 15">
    <location>
        <begin position="377"/>
        <end position="396"/>
    </location>
</feature>
<feature type="repeat" description="LRR 16">
    <location>
        <begin position="397"/>
        <end position="420"/>
    </location>
</feature>
<feature type="repeat" description="LRR 17">
    <location>
        <begin position="421"/>
        <end position="444"/>
    </location>
</feature>
<feature type="repeat" description="LRR 18">
    <location>
        <begin position="564"/>
        <end position="585"/>
    </location>
</feature>
<feature type="glycosylation site" description="N-linked (GlcNAc...) asparagine" evidence="3">
    <location>
        <position position="63"/>
    </location>
</feature>
<feature type="glycosylation site" description="N-linked (GlcNAc...) asparagine" evidence="3">
    <location>
        <position position="77"/>
    </location>
</feature>
<feature type="glycosylation site" description="N-linked (GlcNAc...) asparagine" evidence="3">
    <location>
        <position position="208"/>
    </location>
</feature>
<feature type="glycosylation site" description="N-linked (GlcNAc...) asparagine" evidence="3">
    <location>
        <position position="500"/>
    </location>
</feature>
<feature type="glycosylation site" description="N-linked (GlcNAc...) asparagine" evidence="3">
    <location>
        <position position="792"/>
    </location>
</feature>
<feature type="disulfide bond" evidence="4">
    <location>
        <begin position="34"/>
        <end position="40"/>
    </location>
</feature>
<feature type="disulfide bond" evidence="4">
    <location>
        <begin position="38"/>
        <end position="52"/>
    </location>
</feature>
<feature type="disulfide bond" evidence="4">
    <location>
        <begin position="348"/>
        <end position="373"/>
    </location>
</feature>
<feature type="disulfide bond" evidence="4">
    <location>
        <begin position="479"/>
        <end position="541"/>
    </location>
</feature>
<feature type="disulfide bond" evidence="4">
    <location>
        <begin position="637"/>
        <end position="712"/>
    </location>
</feature>